<keyword id="KW-1003">Cell membrane</keyword>
<keyword id="KW-0472">Membrane</keyword>
<keyword id="KW-0560">Oxidoreductase</keyword>
<keyword id="KW-0812">Transmembrane</keyword>
<keyword id="KW-1133">Transmembrane helix</keyword>
<proteinExistence type="inferred from homology"/>
<accession>Q7A184</accession>
<sequence length="96" mass="10687">MSTIMKHTVGFIASIVLTLLAVYVTLYTSLTFHAKLTIIFGFAFVQAGLQLLMFMHLTEGKDGRLQTFKVIFALVITLCFVVGTYWVMQGGHSSHL</sequence>
<protein>
    <recommendedName>
        <fullName>Probable quinol oxidase subunit 4</fullName>
        <ecNumber>1.10.3.-</ecNumber>
    </recommendedName>
    <alternativeName>
        <fullName>Quinol oxidase polypeptide IV</fullName>
    </alternativeName>
</protein>
<evidence type="ECO:0000250" key="1"/>
<evidence type="ECO:0000255" key="2"/>
<evidence type="ECO:0000305" key="3"/>
<comment type="function">
    <text evidence="1">Catalyzes quinol oxidation with the concomitant reduction of oxygen to water.</text>
</comment>
<comment type="catalytic activity">
    <reaction>
        <text>2 a quinol + O2 = 2 a quinone + 2 H2O</text>
        <dbReference type="Rhea" id="RHEA:55376"/>
        <dbReference type="ChEBI" id="CHEBI:15377"/>
        <dbReference type="ChEBI" id="CHEBI:15379"/>
        <dbReference type="ChEBI" id="CHEBI:24646"/>
        <dbReference type="ChEBI" id="CHEBI:132124"/>
    </reaction>
</comment>
<comment type="subcellular location">
    <subcellularLocation>
        <location evidence="1">Cell membrane</location>
        <topology evidence="1">Multi-pass membrane protein</topology>
    </subcellularLocation>
</comment>
<comment type="similarity">
    <text evidence="3">Belongs to the cytochrome c oxidase bacterial subunit 4 family.</text>
</comment>
<name>QOX4_STAAW</name>
<gene>
    <name type="primary">qoxD</name>
    <name type="ordered locus">MW0941</name>
</gene>
<dbReference type="EC" id="1.10.3.-"/>
<dbReference type="EMBL" id="BA000033">
    <property type="protein sequence ID" value="BAB94806.1"/>
    <property type="molecule type" value="Genomic_DNA"/>
</dbReference>
<dbReference type="SMR" id="Q7A184"/>
<dbReference type="KEGG" id="sam:MW0941"/>
<dbReference type="HOGENOM" id="CLU_140945_2_0_9"/>
<dbReference type="GO" id="GO:0009319">
    <property type="term" value="C:cytochrome o ubiquinol oxidase complex"/>
    <property type="evidence" value="ECO:0007669"/>
    <property type="project" value="TreeGrafter"/>
</dbReference>
<dbReference type="GO" id="GO:0005886">
    <property type="term" value="C:plasma membrane"/>
    <property type="evidence" value="ECO:0007669"/>
    <property type="project" value="UniProtKB-SubCell"/>
</dbReference>
<dbReference type="GO" id="GO:0009486">
    <property type="term" value="F:cytochrome bo3 ubiquinol oxidase activity"/>
    <property type="evidence" value="ECO:0007669"/>
    <property type="project" value="TreeGrafter"/>
</dbReference>
<dbReference type="GO" id="GO:0016682">
    <property type="term" value="F:oxidoreductase activity, acting on diphenols and related substances as donors, oxygen as acceptor"/>
    <property type="evidence" value="ECO:0007669"/>
    <property type="project" value="InterPro"/>
</dbReference>
<dbReference type="GO" id="GO:0015078">
    <property type="term" value="F:proton transmembrane transporter activity"/>
    <property type="evidence" value="ECO:0007669"/>
    <property type="project" value="TreeGrafter"/>
</dbReference>
<dbReference type="GO" id="GO:0019646">
    <property type="term" value="P:aerobic electron transport chain"/>
    <property type="evidence" value="ECO:0007669"/>
    <property type="project" value="TreeGrafter"/>
</dbReference>
<dbReference type="GO" id="GO:0042773">
    <property type="term" value="P:ATP synthesis coupled electron transport"/>
    <property type="evidence" value="ECO:0007669"/>
    <property type="project" value="InterPro"/>
</dbReference>
<dbReference type="GO" id="GO:0015990">
    <property type="term" value="P:electron transport coupled proton transport"/>
    <property type="evidence" value="ECO:0007669"/>
    <property type="project" value="TreeGrafter"/>
</dbReference>
<dbReference type="InterPro" id="IPR005171">
    <property type="entry name" value="Cyt_c_oxidase_su4_prok"/>
</dbReference>
<dbReference type="InterPro" id="IPR050968">
    <property type="entry name" value="Cytochrome_c_oxidase_bac_sub4"/>
</dbReference>
<dbReference type="InterPro" id="IPR014250">
    <property type="entry name" value="QoxD"/>
</dbReference>
<dbReference type="NCBIfam" id="TIGR02901">
    <property type="entry name" value="QoxD"/>
    <property type="match status" value="1"/>
</dbReference>
<dbReference type="PANTHER" id="PTHR36835">
    <property type="entry name" value="CYTOCHROME BO(3) UBIQUINOL OXIDASE SUBUNIT 4"/>
    <property type="match status" value="1"/>
</dbReference>
<dbReference type="PANTHER" id="PTHR36835:SF1">
    <property type="entry name" value="CYTOCHROME BO(3) UBIQUINOL OXIDASE SUBUNIT 4"/>
    <property type="match status" value="1"/>
</dbReference>
<dbReference type="Pfam" id="PF03626">
    <property type="entry name" value="COX4_pro"/>
    <property type="match status" value="1"/>
</dbReference>
<feature type="chain" id="PRO_0000275862" description="Probable quinol oxidase subunit 4">
    <location>
        <begin position="1"/>
        <end position="96"/>
    </location>
</feature>
<feature type="transmembrane region" description="Helical" evidence="2">
    <location>
        <begin position="8"/>
        <end position="28"/>
    </location>
</feature>
<feature type="transmembrane region" description="Helical" evidence="2">
    <location>
        <begin position="36"/>
        <end position="56"/>
    </location>
</feature>
<feature type="transmembrane region" description="Helical" evidence="2">
    <location>
        <begin position="68"/>
        <end position="88"/>
    </location>
</feature>
<reference key="1">
    <citation type="journal article" date="2002" name="Lancet">
        <title>Genome and virulence determinants of high virulence community-acquired MRSA.</title>
        <authorList>
            <person name="Baba T."/>
            <person name="Takeuchi F."/>
            <person name="Kuroda M."/>
            <person name="Yuzawa H."/>
            <person name="Aoki K."/>
            <person name="Oguchi A."/>
            <person name="Nagai Y."/>
            <person name="Iwama N."/>
            <person name="Asano K."/>
            <person name="Naimi T."/>
            <person name="Kuroda H."/>
            <person name="Cui L."/>
            <person name="Yamamoto K."/>
            <person name="Hiramatsu K."/>
        </authorList>
    </citation>
    <scope>NUCLEOTIDE SEQUENCE [LARGE SCALE GENOMIC DNA]</scope>
    <source>
        <strain>MW2</strain>
    </source>
</reference>
<organism>
    <name type="scientific">Staphylococcus aureus (strain MW2)</name>
    <dbReference type="NCBI Taxonomy" id="196620"/>
    <lineage>
        <taxon>Bacteria</taxon>
        <taxon>Bacillati</taxon>
        <taxon>Bacillota</taxon>
        <taxon>Bacilli</taxon>
        <taxon>Bacillales</taxon>
        <taxon>Staphylococcaceae</taxon>
        <taxon>Staphylococcus</taxon>
    </lineage>
</organism>